<evidence type="ECO:0000255" key="1">
    <source>
        <dbReference type="HAMAP-Rule" id="MF_01363"/>
    </source>
</evidence>
<evidence type="ECO:0000305" key="2"/>
<accession>Q9L1I0</accession>
<name>RL21_STRCO</name>
<comment type="function">
    <text evidence="1">This protein binds to 23S rRNA in the presence of protein L20.</text>
</comment>
<comment type="subunit">
    <text evidence="1">Part of the 50S ribosomal subunit. Contacts protein L20.</text>
</comment>
<comment type="similarity">
    <text evidence="1">Belongs to the bacterial ribosomal protein bL21 family.</text>
</comment>
<gene>
    <name evidence="1" type="primary">rplU</name>
    <name type="ordered locus">SCO2597</name>
    <name type="ORF">SCC88.08c</name>
</gene>
<keyword id="KW-1185">Reference proteome</keyword>
<keyword id="KW-0687">Ribonucleoprotein</keyword>
<keyword id="KW-0689">Ribosomal protein</keyword>
<keyword id="KW-0694">RNA-binding</keyword>
<keyword id="KW-0699">rRNA-binding</keyword>
<reference key="1">
    <citation type="journal article" date="2002" name="Nature">
        <title>Complete genome sequence of the model actinomycete Streptomyces coelicolor A3(2).</title>
        <authorList>
            <person name="Bentley S.D."/>
            <person name="Chater K.F."/>
            <person name="Cerdeno-Tarraga A.-M."/>
            <person name="Challis G.L."/>
            <person name="Thomson N.R."/>
            <person name="James K.D."/>
            <person name="Harris D.E."/>
            <person name="Quail M.A."/>
            <person name="Kieser H."/>
            <person name="Harper D."/>
            <person name="Bateman A."/>
            <person name="Brown S."/>
            <person name="Chandra G."/>
            <person name="Chen C.W."/>
            <person name="Collins M."/>
            <person name="Cronin A."/>
            <person name="Fraser A."/>
            <person name="Goble A."/>
            <person name="Hidalgo J."/>
            <person name="Hornsby T."/>
            <person name="Howarth S."/>
            <person name="Huang C.-H."/>
            <person name="Kieser T."/>
            <person name="Larke L."/>
            <person name="Murphy L.D."/>
            <person name="Oliver K."/>
            <person name="O'Neil S."/>
            <person name="Rabbinowitsch E."/>
            <person name="Rajandream M.A."/>
            <person name="Rutherford K.M."/>
            <person name="Rutter S."/>
            <person name="Seeger K."/>
            <person name="Saunders D."/>
            <person name="Sharp S."/>
            <person name="Squares R."/>
            <person name="Squares S."/>
            <person name="Taylor K."/>
            <person name="Warren T."/>
            <person name="Wietzorrek A."/>
            <person name="Woodward J.R."/>
            <person name="Barrell B.G."/>
            <person name="Parkhill J."/>
            <person name="Hopwood D.A."/>
        </authorList>
    </citation>
    <scope>NUCLEOTIDE SEQUENCE [LARGE SCALE GENOMIC DNA]</scope>
    <source>
        <strain>ATCC BAA-471 / A3(2) / M145</strain>
    </source>
</reference>
<organism>
    <name type="scientific">Streptomyces coelicolor (strain ATCC BAA-471 / A3(2) / M145)</name>
    <dbReference type="NCBI Taxonomy" id="100226"/>
    <lineage>
        <taxon>Bacteria</taxon>
        <taxon>Bacillati</taxon>
        <taxon>Actinomycetota</taxon>
        <taxon>Actinomycetes</taxon>
        <taxon>Kitasatosporales</taxon>
        <taxon>Streptomycetaceae</taxon>
        <taxon>Streptomyces</taxon>
        <taxon>Streptomyces albidoflavus group</taxon>
    </lineage>
</organism>
<dbReference type="EMBL" id="AL939113">
    <property type="protein sequence ID" value="CAB75378.1"/>
    <property type="molecule type" value="Genomic_DNA"/>
</dbReference>
<dbReference type="RefSeq" id="NP_626834.1">
    <property type="nucleotide sequence ID" value="NC_003888.3"/>
</dbReference>
<dbReference type="RefSeq" id="WP_003976204.1">
    <property type="nucleotide sequence ID" value="NZ_VNID01000001.1"/>
</dbReference>
<dbReference type="SMR" id="Q9L1I0"/>
<dbReference type="FunCoup" id="Q9L1I0">
    <property type="interactions" value="98"/>
</dbReference>
<dbReference type="STRING" id="100226.gene:17760201"/>
<dbReference type="PaxDb" id="100226-SCO2597"/>
<dbReference type="GeneID" id="96650542"/>
<dbReference type="KEGG" id="sco:SCO2597"/>
<dbReference type="PATRIC" id="fig|100226.15.peg.2643"/>
<dbReference type="eggNOG" id="COG0261">
    <property type="taxonomic scope" value="Bacteria"/>
</dbReference>
<dbReference type="HOGENOM" id="CLU_061463_3_0_11"/>
<dbReference type="InParanoid" id="Q9L1I0"/>
<dbReference type="OrthoDB" id="9813334at2"/>
<dbReference type="PhylomeDB" id="Q9L1I0"/>
<dbReference type="Proteomes" id="UP000001973">
    <property type="component" value="Chromosome"/>
</dbReference>
<dbReference type="GO" id="GO:0005737">
    <property type="term" value="C:cytoplasm"/>
    <property type="evidence" value="ECO:0007669"/>
    <property type="project" value="UniProtKB-ARBA"/>
</dbReference>
<dbReference type="GO" id="GO:1990904">
    <property type="term" value="C:ribonucleoprotein complex"/>
    <property type="evidence" value="ECO:0007669"/>
    <property type="project" value="UniProtKB-KW"/>
</dbReference>
<dbReference type="GO" id="GO:0005840">
    <property type="term" value="C:ribosome"/>
    <property type="evidence" value="ECO:0007669"/>
    <property type="project" value="UniProtKB-KW"/>
</dbReference>
<dbReference type="GO" id="GO:0019843">
    <property type="term" value="F:rRNA binding"/>
    <property type="evidence" value="ECO:0007669"/>
    <property type="project" value="UniProtKB-UniRule"/>
</dbReference>
<dbReference type="GO" id="GO:0003735">
    <property type="term" value="F:structural constituent of ribosome"/>
    <property type="evidence" value="ECO:0000318"/>
    <property type="project" value="GO_Central"/>
</dbReference>
<dbReference type="GO" id="GO:0006412">
    <property type="term" value="P:translation"/>
    <property type="evidence" value="ECO:0007669"/>
    <property type="project" value="UniProtKB-UniRule"/>
</dbReference>
<dbReference type="HAMAP" id="MF_01363">
    <property type="entry name" value="Ribosomal_bL21"/>
    <property type="match status" value="1"/>
</dbReference>
<dbReference type="InterPro" id="IPR028909">
    <property type="entry name" value="bL21-like"/>
</dbReference>
<dbReference type="InterPro" id="IPR036164">
    <property type="entry name" value="bL21-like_sf"/>
</dbReference>
<dbReference type="InterPro" id="IPR001787">
    <property type="entry name" value="Ribosomal_bL21"/>
</dbReference>
<dbReference type="InterPro" id="IPR018258">
    <property type="entry name" value="Ribosomal_bL21_CS"/>
</dbReference>
<dbReference type="NCBIfam" id="TIGR00061">
    <property type="entry name" value="L21"/>
    <property type="match status" value="1"/>
</dbReference>
<dbReference type="PANTHER" id="PTHR21349">
    <property type="entry name" value="50S RIBOSOMAL PROTEIN L21"/>
    <property type="match status" value="1"/>
</dbReference>
<dbReference type="PANTHER" id="PTHR21349:SF0">
    <property type="entry name" value="LARGE RIBOSOMAL SUBUNIT PROTEIN BL21M"/>
    <property type="match status" value="1"/>
</dbReference>
<dbReference type="Pfam" id="PF00829">
    <property type="entry name" value="Ribosomal_L21p"/>
    <property type="match status" value="1"/>
</dbReference>
<dbReference type="SUPFAM" id="SSF141091">
    <property type="entry name" value="L21p-like"/>
    <property type="match status" value="1"/>
</dbReference>
<dbReference type="PROSITE" id="PS01169">
    <property type="entry name" value="RIBOSOMAL_L21"/>
    <property type="match status" value="1"/>
</dbReference>
<protein>
    <recommendedName>
        <fullName evidence="1">Large ribosomal subunit protein bL21</fullName>
    </recommendedName>
    <alternativeName>
        <fullName evidence="2">50S ribosomal protein L21</fullName>
    </alternativeName>
</protein>
<sequence>MYAIVRSGGRQHKVAVGDIVEVDKISTGKVGDTVELSTLLVVDGDAVTSDPWVLAGIKVQAEIVDHHKGQKIDILRYKNKTGYRRRQGHRQQYTAIKVTEIPAAAK</sequence>
<feature type="chain" id="PRO_0000270738" description="Large ribosomal subunit protein bL21">
    <location>
        <begin position="1"/>
        <end position="106"/>
    </location>
</feature>
<proteinExistence type="inferred from homology"/>